<comment type="function">
    <text evidence="1">Catalyzes the interconversion of 2-phosphoglycerate and 3-phosphoglycerate.</text>
</comment>
<comment type="catalytic activity">
    <reaction evidence="1">
        <text>(2R)-2-phosphoglycerate = (2R)-3-phosphoglycerate</text>
        <dbReference type="Rhea" id="RHEA:15901"/>
        <dbReference type="ChEBI" id="CHEBI:58272"/>
        <dbReference type="ChEBI" id="CHEBI:58289"/>
        <dbReference type="EC" id="5.4.2.11"/>
    </reaction>
</comment>
<comment type="pathway">
    <text evidence="1">Carbohydrate degradation; glycolysis; pyruvate from D-glyceraldehyde 3-phosphate: step 3/5.</text>
</comment>
<comment type="similarity">
    <text evidence="1">Belongs to the phosphoglycerate mutase family. BPG-dependent PGAM subfamily.</text>
</comment>
<name>GPMA_LISMC</name>
<protein>
    <recommendedName>
        <fullName evidence="1">2,3-bisphosphoglycerate-dependent phosphoglycerate mutase</fullName>
        <shortName evidence="1">BPG-dependent PGAM</shortName>
        <shortName evidence="1">PGAM</shortName>
        <shortName evidence="1">Phosphoglyceromutase</shortName>
        <shortName evidence="1">dPGM</shortName>
        <ecNumber evidence="1">5.4.2.11</ecNumber>
    </recommendedName>
</protein>
<gene>
    <name evidence="1" type="primary">gpmA</name>
    <name type="ordered locus">Lm4b_02232</name>
</gene>
<evidence type="ECO:0000255" key="1">
    <source>
        <dbReference type="HAMAP-Rule" id="MF_01039"/>
    </source>
</evidence>
<reference key="1">
    <citation type="journal article" date="2012" name="BMC Genomics">
        <title>Comparative genomics and transcriptomics of lineages I, II, and III strains of Listeria monocytogenes.</title>
        <authorList>
            <person name="Hain T."/>
            <person name="Ghai R."/>
            <person name="Billion A."/>
            <person name="Kuenne C.T."/>
            <person name="Steinweg C."/>
            <person name="Izar B."/>
            <person name="Mohamed W."/>
            <person name="Mraheil M."/>
            <person name="Domann E."/>
            <person name="Schaffrath S."/>
            <person name="Karst U."/>
            <person name="Goesmann A."/>
            <person name="Oehm S."/>
            <person name="Puhler A."/>
            <person name="Merkl R."/>
            <person name="Vorwerk S."/>
            <person name="Glaser P."/>
            <person name="Garrido P."/>
            <person name="Rusniok C."/>
            <person name="Buchrieser C."/>
            <person name="Goebel W."/>
            <person name="Chakraborty T."/>
        </authorList>
    </citation>
    <scope>NUCLEOTIDE SEQUENCE [LARGE SCALE GENOMIC DNA]</scope>
    <source>
        <strain>CLIP80459</strain>
    </source>
</reference>
<dbReference type="EC" id="5.4.2.11" evidence="1"/>
<dbReference type="EMBL" id="FM242711">
    <property type="protein sequence ID" value="CAS05989.1"/>
    <property type="molecule type" value="Genomic_DNA"/>
</dbReference>
<dbReference type="RefSeq" id="WP_003726238.1">
    <property type="nucleotide sequence ID" value="NC_012488.1"/>
</dbReference>
<dbReference type="SMR" id="C1KXG0"/>
<dbReference type="KEGG" id="lmc:Lm4b_02232"/>
<dbReference type="HOGENOM" id="CLU_033323_1_1_9"/>
<dbReference type="UniPathway" id="UPA00109">
    <property type="reaction ID" value="UER00186"/>
</dbReference>
<dbReference type="GO" id="GO:0004619">
    <property type="term" value="F:phosphoglycerate mutase activity"/>
    <property type="evidence" value="ECO:0007669"/>
    <property type="project" value="UniProtKB-EC"/>
</dbReference>
<dbReference type="GO" id="GO:0006094">
    <property type="term" value="P:gluconeogenesis"/>
    <property type="evidence" value="ECO:0007669"/>
    <property type="project" value="UniProtKB-UniRule"/>
</dbReference>
<dbReference type="GO" id="GO:0006096">
    <property type="term" value="P:glycolytic process"/>
    <property type="evidence" value="ECO:0007669"/>
    <property type="project" value="UniProtKB-UniRule"/>
</dbReference>
<dbReference type="CDD" id="cd07067">
    <property type="entry name" value="HP_PGM_like"/>
    <property type="match status" value="1"/>
</dbReference>
<dbReference type="FunFam" id="3.40.50.1240:FF:000003">
    <property type="entry name" value="2,3-bisphosphoglycerate-dependent phosphoglycerate mutase"/>
    <property type="match status" value="1"/>
</dbReference>
<dbReference type="Gene3D" id="3.40.50.1240">
    <property type="entry name" value="Phosphoglycerate mutase-like"/>
    <property type="match status" value="1"/>
</dbReference>
<dbReference type="HAMAP" id="MF_01039">
    <property type="entry name" value="PGAM_GpmA"/>
    <property type="match status" value="1"/>
</dbReference>
<dbReference type="InterPro" id="IPR013078">
    <property type="entry name" value="His_Pase_superF_clade-1"/>
</dbReference>
<dbReference type="InterPro" id="IPR029033">
    <property type="entry name" value="His_PPase_superfam"/>
</dbReference>
<dbReference type="InterPro" id="IPR001345">
    <property type="entry name" value="PG/BPGM_mutase_AS"/>
</dbReference>
<dbReference type="InterPro" id="IPR005952">
    <property type="entry name" value="Phosphogly_mut1"/>
</dbReference>
<dbReference type="NCBIfam" id="TIGR01258">
    <property type="entry name" value="pgm_1"/>
    <property type="match status" value="1"/>
</dbReference>
<dbReference type="NCBIfam" id="NF010713">
    <property type="entry name" value="PRK14115.1"/>
    <property type="match status" value="1"/>
</dbReference>
<dbReference type="PANTHER" id="PTHR11931">
    <property type="entry name" value="PHOSPHOGLYCERATE MUTASE"/>
    <property type="match status" value="1"/>
</dbReference>
<dbReference type="Pfam" id="PF00300">
    <property type="entry name" value="His_Phos_1"/>
    <property type="match status" value="2"/>
</dbReference>
<dbReference type="PIRSF" id="PIRSF000709">
    <property type="entry name" value="6PFK_2-Ptase"/>
    <property type="match status" value="1"/>
</dbReference>
<dbReference type="SMART" id="SM00855">
    <property type="entry name" value="PGAM"/>
    <property type="match status" value="1"/>
</dbReference>
<dbReference type="SUPFAM" id="SSF53254">
    <property type="entry name" value="Phosphoglycerate mutase-like"/>
    <property type="match status" value="1"/>
</dbReference>
<dbReference type="PROSITE" id="PS00175">
    <property type="entry name" value="PG_MUTASE"/>
    <property type="match status" value="1"/>
</dbReference>
<sequence length="229" mass="26415">MKLVLIRHGQSEWNKLNLFTGWHDVDLSQEGVVEAMTAGKRIKEAGLEFDVAFTSVLTRAIKTLNYVLEESDQMWVPVHKSWRLNERHYGALQGLNKQETAEKYGADQVQKWRRSYDTLPPLLEENDERQAKNDRRYQLLDTHAIPAGENLKVTLERVIPYWMDTIAPEIKEGRRVVIAAHGNSLRALVKFLEGIGDDEIMDLEIPTGVPLVYELNDDLKPVNKYYLDK</sequence>
<organism>
    <name type="scientific">Listeria monocytogenes serotype 4b (strain CLIP80459)</name>
    <dbReference type="NCBI Taxonomy" id="568819"/>
    <lineage>
        <taxon>Bacteria</taxon>
        <taxon>Bacillati</taxon>
        <taxon>Bacillota</taxon>
        <taxon>Bacilli</taxon>
        <taxon>Bacillales</taxon>
        <taxon>Listeriaceae</taxon>
        <taxon>Listeria</taxon>
    </lineage>
</organism>
<feature type="chain" id="PRO_1000213392" description="2,3-bisphosphoglycerate-dependent phosphoglycerate mutase">
    <location>
        <begin position="1"/>
        <end position="229"/>
    </location>
</feature>
<feature type="active site" description="Tele-phosphohistidine intermediate" evidence="1">
    <location>
        <position position="8"/>
    </location>
</feature>
<feature type="active site" description="Proton donor/acceptor" evidence="1">
    <location>
        <position position="86"/>
    </location>
</feature>
<feature type="binding site" evidence="1">
    <location>
        <begin position="7"/>
        <end position="14"/>
    </location>
    <ligand>
        <name>substrate</name>
    </ligand>
</feature>
<feature type="binding site" evidence="1">
    <location>
        <begin position="20"/>
        <end position="21"/>
    </location>
    <ligand>
        <name>substrate</name>
    </ligand>
</feature>
<feature type="binding site" evidence="1">
    <location>
        <position position="59"/>
    </location>
    <ligand>
        <name>substrate</name>
    </ligand>
</feature>
<feature type="binding site" evidence="1">
    <location>
        <begin position="86"/>
        <end position="89"/>
    </location>
    <ligand>
        <name>substrate</name>
    </ligand>
</feature>
<feature type="binding site" evidence="1">
    <location>
        <position position="97"/>
    </location>
    <ligand>
        <name>substrate</name>
    </ligand>
</feature>
<feature type="binding site" evidence="1">
    <location>
        <begin position="113"/>
        <end position="114"/>
    </location>
    <ligand>
        <name>substrate</name>
    </ligand>
</feature>
<feature type="binding site" evidence="1">
    <location>
        <begin position="182"/>
        <end position="183"/>
    </location>
    <ligand>
        <name>substrate</name>
    </ligand>
</feature>
<feature type="site" description="Transition state stabilizer" evidence="1">
    <location>
        <position position="181"/>
    </location>
</feature>
<accession>C1KXG0</accession>
<proteinExistence type="inferred from homology"/>
<keyword id="KW-0312">Gluconeogenesis</keyword>
<keyword id="KW-0324">Glycolysis</keyword>
<keyword id="KW-0413">Isomerase</keyword>